<sequence length="185" mass="20639">MISDIRKDAEVRMDKCVEAFKTQISKIRTGRASPSLLDGIVVEYYGTPTPLRQLASVTVEDSRTLKINVFDRSMSPAVEKAIMASDLGLNPNSAGSDIRVPLPPLTEERRKDLTKIVRGEAEQARVAVRNVRRDANDKVKALLKDKEISEDDDRRSQDDVQKLTDAAIKKIEAALADKEAELMQF</sequence>
<comment type="function">
    <text evidence="1">Responsible for the release of ribosomes from messenger RNA at the termination of protein biosynthesis. May increase the efficiency of translation by recycling ribosomes from one round of translation to another.</text>
</comment>
<comment type="subcellular location">
    <subcellularLocation>
        <location evidence="1">Cytoplasm</location>
    </subcellularLocation>
</comment>
<comment type="similarity">
    <text evidence="1">Belongs to the RRF family.</text>
</comment>
<protein>
    <recommendedName>
        <fullName evidence="1">Ribosome-recycling factor</fullName>
        <shortName evidence="1">RRF</shortName>
    </recommendedName>
    <alternativeName>
        <fullName evidence="1">Ribosome-releasing factor</fullName>
    </alternativeName>
</protein>
<name>RRF_ECOL6</name>
<reference key="1">
    <citation type="journal article" date="2002" name="Proc. Natl. Acad. Sci. U.S.A.">
        <title>Extensive mosaic structure revealed by the complete genome sequence of uropathogenic Escherichia coli.</title>
        <authorList>
            <person name="Welch R.A."/>
            <person name="Burland V."/>
            <person name="Plunkett G. III"/>
            <person name="Redford P."/>
            <person name="Roesch P."/>
            <person name="Rasko D."/>
            <person name="Buckles E.L."/>
            <person name="Liou S.-R."/>
            <person name="Boutin A."/>
            <person name="Hackett J."/>
            <person name="Stroud D."/>
            <person name="Mayhew G.F."/>
            <person name="Rose D.J."/>
            <person name="Zhou S."/>
            <person name="Schwartz D.C."/>
            <person name="Perna N.T."/>
            <person name="Mobley H.L.T."/>
            <person name="Donnenberg M.S."/>
            <person name="Blattner F.R."/>
        </authorList>
    </citation>
    <scope>NUCLEOTIDE SEQUENCE [LARGE SCALE GENOMIC DNA]</scope>
    <source>
        <strain>CFT073 / ATCC 700928 / UPEC</strain>
    </source>
</reference>
<feature type="chain" id="PRO_0000167456" description="Ribosome-recycling factor">
    <location>
        <begin position="1"/>
        <end position="185"/>
    </location>
</feature>
<feature type="modified residue" description="N6-acetyllysine" evidence="1">
    <location>
        <position position="162"/>
    </location>
</feature>
<accession>P0A806</accession>
<accession>P16174</accession>
<dbReference type="EMBL" id="AE014075">
    <property type="protein sequence ID" value="AAN78702.1"/>
    <property type="molecule type" value="Genomic_DNA"/>
</dbReference>
<dbReference type="RefSeq" id="WP_000622418.1">
    <property type="nucleotide sequence ID" value="NZ_CP051263.1"/>
</dbReference>
<dbReference type="SMR" id="P0A806"/>
<dbReference type="STRING" id="199310.c0208"/>
<dbReference type="GeneID" id="93777253"/>
<dbReference type="KEGG" id="ecc:c0208"/>
<dbReference type="eggNOG" id="COG0233">
    <property type="taxonomic scope" value="Bacteria"/>
</dbReference>
<dbReference type="HOGENOM" id="CLU_073981_2_1_6"/>
<dbReference type="BioCyc" id="ECOL199310:C0208-MONOMER"/>
<dbReference type="Proteomes" id="UP000001410">
    <property type="component" value="Chromosome"/>
</dbReference>
<dbReference type="GO" id="GO:0005829">
    <property type="term" value="C:cytosol"/>
    <property type="evidence" value="ECO:0007669"/>
    <property type="project" value="GOC"/>
</dbReference>
<dbReference type="GO" id="GO:0043023">
    <property type="term" value="F:ribosomal large subunit binding"/>
    <property type="evidence" value="ECO:0007669"/>
    <property type="project" value="TreeGrafter"/>
</dbReference>
<dbReference type="GO" id="GO:0002184">
    <property type="term" value="P:cytoplasmic translational termination"/>
    <property type="evidence" value="ECO:0007669"/>
    <property type="project" value="TreeGrafter"/>
</dbReference>
<dbReference type="CDD" id="cd00520">
    <property type="entry name" value="RRF"/>
    <property type="match status" value="1"/>
</dbReference>
<dbReference type="FunFam" id="1.10.132.20:FF:000001">
    <property type="entry name" value="Ribosome-recycling factor"/>
    <property type="match status" value="1"/>
</dbReference>
<dbReference type="FunFam" id="3.30.1360.40:FF:000001">
    <property type="entry name" value="Ribosome-recycling factor"/>
    <property type="match status" value="1"/>
</dbReference>
<dbReference type="Gene3D" id="3.30.1360.40">
    <property type="match status" value="1"/>
</dbReference>
<dbReference type="Gene3D" id="1.10.132.20">
    <property type="entry name" value="Ribosome-recycling factor"/>
    <property type="match status" value="1"/>
</dbReference>
<dbReference type="HAMAP" id="MF_00040">
    <property type="entry name" value="RRF"/>
    <property type="match status" value="1"/>
</dbReference>
<dbReference type="InterPro" id="IPR002661">
    <property type="entry name" value="Ribosome_recyc_fac"/>
</dbReference>
<dbReference type="InterPro" id="IPR023584">
    <property type="entry name" value="Ribosome_recyc_fac_dom"/>
</dbReference>
<dbReference type="InterPro" id="IPR036191">
    <property type="entry name" value="RRF_sf"/>
</dbReference>
<dbReference type="NCBIfam" id="TIGR00496">
    <property type="entry name" value="frr"/>
    <property type="match status" value="1"/>
</dbReference>
<dbReference type="PANTHER" id="PTHR20982:SF3">
    <property type="entry name" value="MITOCHONDRIAL RIBOSOME RECYCLING FACTOR PSEUDO 1"/>
    <property type="match status" value="1"/>
</dbReference>
<dbReference type="PANTHER" id="PTHR20982">
    <property type="entry name" value="RIBOSOME RECYCLING FACTOR"/>
    <property type="match status" value="1"/>
</dbReference>
<dbReference type="Pfam" id="PF01765">
    <property type="entry name" value="RRF"/>
    <property type="match status" value="1"/>
</dbReference>
<dbReference type="SUPFAM" id="SSF55194">
    <property type="entry name" value="Ribosome recycling factor, RRF"/>
    <property type="match status" value="1"/>
</dbReference>
<proteinExistence type="inferred from homology"/>
<gene>
    <name evidence="1" type="primary">frr</name>
    <name type="ordered locus">c0208</name>
</gene>
<organism>
    <name type="scientific">Escherichia coli O6:H1 (strain CFT073 / ATCC 700928 / UPEC)</name>
    <dbReference type="NCBI Taxonomy" id="199310"/>
    <lineage>
        <taxon>Bacteria</taxon>
        <taxon>Pseudomonadati</taxon>
        <taxon>Pseudomonadota</taxon>
        <taxon>Gammaproteobacteria</taxon>
        <taxon>Enterobacterales</taxon>
        <taxon>Enterobacteriaceae</taxon>
        <taxon>Escherichia</taxon>
    </lineage>
</organism>
<evidence type="ECO:0000255" key="1">
    <source>
        <dbReference type="HAMAP-Rule" id="MF_00040"/>
    </source>
</evidence>
<keyword id="KW-0007">Acetylation</keyword>
<keyword id="KW-0963">Cytoplasm</keyword>
<keyword id="KW-0648">Protein biosynthesis</keyword>
<keyword id="KW-1185">Reference proteome</keyword>